<dbReference type="EMBL" id="CP000653">
    <property type="protein sequence ID" value="ABP61838.1"/>
    <property type="molecule type" value="Genomic_DNA"/>
</dbReference>
<dbReference type="RefSeq" id="WP_015960167.1">
    <property type="nucleotide sequence ID" value="NC_009436.1"/>
</dbReference>
<dbReference type="SMR" id="A4WDQ8"/>
<dbReference type="STRING" id="399742.Ent638_3174"/>
<dbReference type="KEGG" id="ent:Ent638_3174"/>
<dbReference type="eggNOG" id="COG0468">
    <property type="taxonomic scope" value="Bacteria"/>
</dbReference>
<dbReference type="HOGENOM" id="CLU_040469_3_2_6"/>
<dbReference type="OrthoDB" id="9776733at2"/>
<dbReference type="Proteomes" id="UP000000230">
    <property type="component" value="Chromosome"/>
</dbReference>
<dbReference type="GO" id="GO:0005829">
    <property type="term" value="C:cytosol"/>
    <property type="evidence" value="ECO:0007669"/>
    <property type="project" value="TreeGrafter"/>
</dbReference>
<dbReference type="GO" id="GO:0005524">
    <property type="term" value="F:ATP binding"/>
    <property type="evidence" value="ECO:0007669"/>
    <property type="project" value="UniProtKB-UniRule"/>
</dbReference>
<dbReference type="GO" id="GO:0016887">
    <property type="term" value="F:ATP hydrolysis activity"/>
    <property type="evidence" value="ECO:0007669"/>
    <property type="project" value="InterPro"/>
</dbReference>
<dbReference type="GO" id="GO:0140664">
    <property type="term" value="F:ATP-dependent DNA damage sensor activity"/>
    <property type="evidence" value="ECO:0007669"/>
    <property type="project" value="InterPro"/>
</dbReference>
<dbReference type="GO" id="GO:0003684">
    <property type="term" value="F:damaged DNA binding"/>
    <property type="evidence" value="ECO:0007669"/>
    <property type="project" value="UniProtKB-UniRule"/>
</dbReference>
<dbReference type="GO" id="GO:0003697">
    <property type="term" value="F:single-stranded DNA binding"/>
    <property type="evidence" value="ECO:0007669"/>
    <property type="project" value="UniProtKB-UniRule"/>
</dbReference>
<dbReference type="GO" id="GO:0006310">
    <property type="term" value="P:DNA recombination"/>
    <property type="evidence" value="ECO:0007669"/>
    <property type="project" value="UniProtKB-UniRule"/>
</dbReference>
<dbReference type="GO" id="GO:0006281">
    <property type="term" value="P:DNA repair"/>
    <property type="evidence" value="ECO:0007669"/>
    <property type="project" value="UniProtKB-UniRule"/>
</dbReference>
<dbReference type="GO" id="GO:0009432">
    <property type="term" value="P:SOS response"/>
    <property type="evidence" value="ECO:0007669"/>
    <property type="project" value="UniProtKB-UniRule"/>
</dbReference>
<dbReference type="CDD" id="cd00983">
    <property type="entry name" value="RecA"/>
    <property type="match status" value="1"/>
</dbReference>
<dbReference type="FunFam" id="3.40.50.300:FF:000087">
    <property type="entry name" value="Recombinase RecA"/>
    <property type="match status" value="1"/>
</dbReference>
<dbReference type="Gene3D" id="3.40.50.300">
    <property type="entry name" value="P-loop containing nucleotide triphosphate hydrolases"/>
    <property type="match status" value="1"/>
</dbReference>
<dbReference type="HAMAP" id="MF_00268">
    <property type="entry name" value="RecA"/>
    <property type="match status" value="1"/>
</dbReference>
<dbReference type="InterPro" id="IPR003593">
    <property type="entry name" value="AAA+_ATPase"/>
</dbReference>
<dbReference type="InterPro" id="IPR013765">
    <property type="entry name" value="DNA_recomb/repair_RecA"/>
</dbReference>
<dbReference type="InterPro" id="IPR020584">
    <property type="entry name" value="DNA_recomb/repair_RecA_CS"/>
</dbReference>
<dbReference type="InterPro" id="IPR027417">
    <property type="entry name" value="P-loop_NTPase"/>
</dbReference>
<dbReference type="InterPro" id="IPR049261">
    <property type="entry name" value="RecA-like_C"/>
</dbReference>
<dbReference type="InterPro" id="IPR049428">
    <property type="entry name" value="RecA-like_N"/>
</dbReference>
<dbReference type="InterPro" id="IPR020588">
    <property type="entry name" value="RecA_ATP-bd"/>
</dbReference>
<dbReference type="InterPro" id="IPR023400">
    <property type="entry name" value="RecA_C_sf"/>
</dbReference>
<dbReference type="InterPro" id="IPR020587">
    <property type="entry name" value="RecA_monomer-monomer_interface"/>
</dbReference>
<dbReference type="NCBIfam" id="TIGR02012">
    <property type="entry name" value="tigrfam_recA"/>
    <property type="match status" value="1"/>
</dbReference>
<dbReference type="PANTHER" id="PTHR45900:SF1">
    <property type="entry name" value="MITOCHONDRIAL DNA REPAIR PROTEIN RECA HOMOLOG-RELATED"/>
    <property type="match status" value="1"/>
</dbReference>
<dbReference type="PANTHER" id="PTHR45900">
    <property type="entry name" value="RECA"/>
    <property type="match status" value="1"/>
</dbReference>
<dbReference type="Pfam" id="PF00154">
    <property type="entry name" value="RecA"/>
    <property type="match status" value="1"/>
</dbReference>
<dbReference type="Pfam" id="PF21096">
    <property type="entry name" value="RecA_C"/>
    <property type="match status" value="1"/>
</dbReference>
<dbReference type="PRINTS" id="PR00142">
    <property type="entry name" value="RECA"/>
</dbReference>
<dbReference type="SMART" id="SM00382">
    <property type="entry name" value="AAA"/>
    <property type="match status" value="1"/>
</dbReference>
<dbReference type="SUPFAM" id="SSF52540">
    <property type="entry name" value="P-loop containing nucleoside triphosphate hydrolases"/>
    <property type="match status" value="1"/>
</dbReference>
<dbReference type="SUPFAM" id="SSF54752">
    <property type="entry name" value="RecA protein, C-terminal domain"/>
    <property type="match status" value="1"/>
</dbReference>
<dbReference type="PROSITE" id="PS00321">
    <property type="entry name" value="RECA_1"/>
    <property type="match status" value="1"/>
</dbReference>
<dbReference type="PROSITE" id="PS50162">
    <property type="entry name" value="RECA_2"/>
    <property type="match status" value="1"/>
</dbReference>
<dbReference type="PROSITE" id="PS50163">
    <property type="entry name" value="RECA_3"/>
    <property type="match status" value="1"/>
</dbReference>
<gene>
    <name evidence="1" type="primary">recA</name>
    <name type="ordered locus">Ent638_3174</name>
</gene>
<reference key="1">
    <citation type="journal article" date="2010" name="PLoS Genet.">
        <title>Genome sequence of the plant growth promoting endophytic bacterium Enterobacter sp. 638.</title>
        <authorList>
            <person name="Taghavi S."/>
            <person name="van der Lelie D."/>
            <person name="Hoffman A."/>
            <person name="Zhang Y.B."/>
            <person name="Walla M.D."/>
            <person name="Vangronsveld J."/>
            <person name="Newman L."/>
            <person name="Monchy S."/>
        </authorList>
    </citation>
    <scope>NUCLEOTIDE SEQUENCE [LARGE SCALE GENOMIC DNA]</scope>
    <source>
        <strain>638</strain>
    </source>
</reference>
<sequence>MAIDENKQKALAAALGQIEKQFGKGSIMRLGEDRSMDVETISTGSLSLDIALGAGGLPMGRVVEIYGPESSGKTTLTLQVIASAQREGKTCAFIDAEHALDPVYARKLGVDIDNLLCSQPDTGEQALEICDALARSGAVDVIVVDSVAALTPKAEIEGEIGDSHMGLAARMMSQAMRKLAGNLKQSNTLLIFINQIRMKIGVMFGNPETTTGGNALKFYASVRLDIRRIGAVKDGDNVIGSETRVKVVKNKIAAPFKQAEFQILYGEGINFFGELVDLGVKEKLIEKAGAWYSYNGEKIGQGKANAISWLKENPAAAKEIEKKVRELLLNNEDSKPDFVVDAADAEETNPDF</sequence>
<evidence type="ECO:0000255" key="1">
    <source>
        <dbReference type="HAMAP-Rule" id="MF_00268"/>
    </source>
</evidence>
<protein>
    <recommendedName>
        <fullName evidence="1">Protein RecA</fullName>
    </recommendedName>
    <alternativeName>
        <fullName evidence="1">Recombinase A</fullName>
    </alternativeName>
</protein>
<name>RECA_ENT38</name>
<organism>
    <name type="scientific">Enterobacter sp. (strain 638)</name>
    <dbReference type="NCBI Taxonomy" id="399742"/>
    <lineage>
        <taxon>Bacteria</taxon>
        <taxon>Pseudomonadati</taxon>
        <taxon>Pseudomonadota</taxon>
        <taxon>Gammaproteobacteria</taxon>
        <taxon>Enterobacterales</taxon>
        <taxon>Enterobacteriaceae</taxon>
        <taxon>Enterobacter</taxon>
    </lineage>
</organism>
<feature type="chain" id="PRO_1000059126" description="Protein RecA">
    <location>
        <begin position="1"/>
        <end position="352"/>
    </location>
</feature>
<feature type="binding site" evidence="1">
    <location>
        <begin position="67"/>
        <end position="74"/>
    </location>
    <ligand>
        <name>ATP</name>
        <dbReference type="ChEBI" id="CHEBI:30616"/>
    </ligand>
</feature>
<keyword id="KW-0067">ATP-binding</keyword>
<keyword id="KW-0963">Cytoplasm</keyword>
<keyword id="KW-0227">DNA damage</keyword>
<keyword id="KW-0233">DNA recombination</keyword>
<keyword id="KW-0234">DNA repair</keyword>
<keyword id="KW-0238">DNA-binding</keyword>
<keyword id="KW-0547">Nucleotide-binding</keyword>
<keyword id="KW-0742">SOS response</keyword>
<comment type="function">
    <text evidence="1">Can catalyze the hydrolysis of ATP in the presence of single-stranded DNA, the ATP-dependent uptake of single-stranded DNA by duplex DNA, and the ATP-dependent hybridization of homologous single-stranded DNAs. It interacts with LexA causing its activation and leading to its autocatalytic cleavage.</text>
</comment>
<comment type="subcellular location">
    <subcellularLocation>
        <location evidence="1">Cytoplasm</location>
    </subcellularLocation>
</comment>
<comment type="similarity">
    <text evidence="1">Belongs to the RecA family.</text>
</comment>
<proteinExistence type="inferred from homology"/>
<accession>A4WDQ8</accession>